<organism>
    <name type="scientific">Cupriavidus metallidurans (strain ATCC 43123 / DSM 2839 / NBRC 102507 / CH34)</name>
    <name type="common">Ralstonia metallidurans</name>
    <dbReference type="NCBI Taxonomy" id="266264"/>
    <lineage>
        <taxon>Bacteria</taxon>
        <taxon>Pseudomonadati</taxon>
        <taxon>Pseudomonadota</taxon>
        <taxon>Betaproteobacteria</taxon>
        <taxon>Burkholderiales</taxon>
        <taxon>Burkholderiaceae</taxon>
        <taxon>Cupriavidus</taxon>
    </lineage>
</organism>
<dbReference type="EC" id="4.2.3.5" evidence="1"/>
<dbReference type="EMBL" id="CP000352">
    <property type="protein sequence ID" value="ABF08024.1"/>
    <property type="molecule type" value="Genomic_DNA"/>
</dbReference>
<dbReference type="RefSeq" id="WP_011515925.1">
    <property type="nucleotide sequence ID" value="NC_007973.1"/>
</dbReference>
<dbReference type="SMR" id="Q1LPA2"/>
<dbReference type="STRING" id="266264.Rmet_1138"/>
<dbReference type="KEGG" id="rme:Rmet_1138"/>
<dbReference type="eggNOG" id="COG0082">
    <property type="taxonomic scope" value="Bacteria"/>
</dbReference>
<dbReference type="HOGENOM" id="CLU_034547_0_2_4"/>
<dbReference type="UniPathway" id="UPA00053">
    <property type="reaction ID" value="UER00090"/>
</dbReference>
<dbReference type="Proteomes" id="UP000002429">
    <property type="component" value="Chromosome"/>
</dbReference>
<dbReference type="GO" id="GO:0005829">
    <property type="term" value="C:cytosol"/>
    <property type="evidence" value="ECO:0007669"/>
    <property type="project" value="TreeGrafter"/>
</dbReference>
<dbReference type="GO" id="GO:0004107">
    <property type="term" value="F:chorismate synthase activity"/>
    <property type="evidence" value="ECO:0007669"/>
    <property type="project" value="UniProtKB-UniRule"/>
</dbReference>
<dbReference type="GO" id="GO:0010181">
    <property type="term" value="F:FMN binding"/>
    <property type="evidence" value="ECO:0007669"/>
    <property type="project" value="TreeGrafter"/>
</dbReference>
<dbReference type="GO" id="GO:0008652">
    <property type="term" value="P:amino acid biosynthetic process"/>
    <property type="evidence" value="ECO:0007669"/>
    <property type="project" value="UniProtKB-KW"/>
</dbReference>
<dbReference type="GO" id="GO:0009073">
    <property type="term" value="P:aromatic amino acid family biosynthetic process"/>
    <property type="evidence" value="ECO:0007669"/>
    <property type="project" value="UniProtKB-KW"/>
</dbReference>
<dbReference type="GO" id="GO:0009423">
    <property type="term" value="P:chorismate biosynthetic process"/>
    <property type="evidence" value="ECO:0007669"/>
    <property type="project" value="UniProtKB-UniRule"/>
</dbReference>
<dbReference type="CDD" id="cd07304">
    <property type="entry name" value="Chorismate_synthase"/>
    <property type="match status" value="1"/>
</dbReference>
<dbReference type="FunFam" id="3.60.150.10:FF:000001">
    <property type="entry name" value="Chorismate synthase"/>
    <property type="match status" value="1"/>
</dbReference>
<dbReference type="Gene3D" id="3.60.150.10">
    <property type="entry name" value="Chorismate synthase AroC"/>
    <property type="match status" value="1"/>
</dbReference>
<dbReference type="HAMAP" id="MF_00300">
    <property type="entry name" value="Chorismate_synth"/>
    <property type="match status" value="1"/>
</dbReference>
<dbReference type="InterPro" id="IPR000453">
    <property type="entry name" value="Chorismate_synth"/>
</dbReference>
<dbReference type="InterPro" id="IPR035904">
    <property type="entry name" value="Chorismate_synth_AroC_sf"/>
</dbReference>
<dbReference type="InterPro" id="IPR020541">
    <property type="entry name" value="Chorismate_synthase_CS"/>
</dbReference>
<dbReference type="NCBIfam" id="TIGR00033">
    <property type="entry name" value="aroC"/>
    <property type="match status" value="1"/>
</dbReference>
<dbReference type="NCBIfam" id="NF003793">
    <property type="entry name" value="PRK05382.1"/>
    <property type="match status" value="1"/>
</dbReference>
<dbReference type="PANTHER" id="PTHR21085">
    <property type="entry name" value="CHORISMATE SYNTHASE"/>
    <property type="match status" value="1"/>
</dbReference>
<dbReference type="PANTHER" id="PTHR21085:SF0">
    <property type="entry name" value="CHORISMATE SYNTHASE"/>
    <property type="match status" value="1"/>
</dbReference>
<dbReference type="Pfam" id="PF01264">
    <property type="entry name" value="Chorismate_synt"/>
    <property type="match status" value="1"/>
</dbReference>
<dbReference type="PIRSF" id="PIRSF001456">
    <property type="entry name" value="Chorismate_synth"/>
    <property type="match status" value="1"/>
</dbReference>
<dbReference type="SUPFAM" id="SSF103263">
    <property type="entry name" value="Chorismate synthase, AroC"/>
    <property type="match status" value="1"/>
</dbReference>
<dbReference type="PROSITE" id="PS00787">
    <property type="entry name" value="CHORISMATE_SYNTHASE_1"/>
    <property type="match status" value="1"/>
</dbReference>
<dbReference type="PROSITE" id="PS00788">
    <property type="entry name" value="CHORISMATE_SYNTHASE_2"/>
    <property type="match status" value="1"/>
</dbReference>
<dbReference type="PROSITE" id="PS00789">
    <property type="entry name" value="CHORISMATE_SYNTHASE_3"/>
    <property type="match status" value="1"/>
</dbReference>
<feature type="chain" id="PRO_0000256323" description="Chorismate synthase">
    <location>
        <begin position="1"/>
        <end position="369"/>
    </location>
</feature>
<feature type="binding site" evidence="1">
    <location>
        <position position="48"/>
    </location>
    <ligand>
        <name>NADP(+)</name>
        <dbReference type="ChEBI" id="CHEBI:58349"/>
    </ligand>
</feature>
<feature type="binding site" evidence="1">
    <location>
        <position position="54"/>
    </location>
    <ligand>
        <name>NADP(+)</name>
        <dbReference type="ChEBI" id="CHEBI:58349"/>
    </ligand>
</feature>
<feature type="binding site" evidence="1">
    <location>
        <begin position="125"/>
        <end position="127"/>
    </location>
    <ligand>
        <name>FMN</name>
        <dbReference type="ChEBI" id="CHEBI:58210"/>
    </ligand>
</feature>
<feature type="binding site" evidence="1">
    <location>
        <begin position="238"/>
        <end position="239"/>
    </location>
    <ligand>
        <name>FMN</name>
        <dbReference type="ChEBI" id="CHEBI:58210"/>
    </ligand>
</feature>
<feature type="binding site" evidence="1">
    <location>
        <position position="278"/>
    </location>
    <ligand>
        <name>FMN</name>
        <dbReference type="ChEBI" id="CHEBI:58210"/>
    </ligand>
</feature>
<feature type="binding site" evidence="1">
    <location>
        <begin position="293"/>
        <end position="297"/>
    </location>
    <ligand>
        <name>FMN</name>
        <dbReference type="ChEBI" id="CHEBI:58210"/>
    </ligand>
</feature>
<feature type="binding site" evidence="1">
    <location>
        <position position="319"/>
    </location>
    <ligand>
        <name>FMN</name>
        <dbReference type="ChEBI" id="CHEBI:58210"/>
    </ligand>
</feature>
<reference key="1">
    <citation type="journal article" date="2010" name="PLoS ONE">
        <title>The complete genome sequence of Cupriavidus metallidurans strain CH34, a master survivalist in harsh and anthropogenic environments.</title>
        <authorList>
            <person name="Janssen P.J."/>
            <person name="Van Houdt R."/>
            <person name="Moors H."/>
            <person name="Monsieurs P."/>
            <person name="Morin N."/>
            <person name="Michaux A."/>
            <person name="Benotmane M.A."/>
            <person name="Leys N."/>
            <person name="Vallaeys T."/>
            <person name="Lapidus A."/>
            <person name="Monchy S."/>
            <person name="Medigue C."/>
            <person name="Taghavi S."/>
            <person name="McCorkle S."/>
            <person name="Dunn J."/>
            <person name="van der Lelie D."/>
            <person name="Mergeay M."/>
        </authorList>
    </citation>
    <scope>NUCLEOTIDE SEQUENCE [LARGE SCALE GENOMIC DNA]</scope>
    <source>
        <strain>ATCC 43123 / DSM 2839 / NBRC 102507 / CH34</strain>
    </source>
</reference>
<comment type="function">
    <text evidence="1">Catalyzes the anti-1,4-elimination of the C-3 phosphate and the C-6 proR hydrogen from 5-enolpyruvylshikimate-3-phosphate (EPSP) to yield chorismate, which is the branch point compound that serves as the starting substrate for the three terminal pathways of aromatic amino acid biosynthesis. This reaction introduces a second double bond into the aromatic ring system.</text>
</comment>
<comment type="catalytic activity">
    <reaction evidence="1">
        <text>5-O-(1-carboxyvinyl)-3-phosphoshikimate = chorismate + phosphate</text>
        <dbReference type="Rhea" id="RHEA:21020"/>
        <dbReference type="ChEBI" id="CHEBI:29748"/>
        <dbReference type="ChEBI" id="CHEBI:43474"/>
        <dbReference type="ChEBI" id="CHEBI:57701"/>
        <dbReference type="EC" id="4.2.3.5"/>
    </reaction>
</comment>
<comment type="cofactor">
    <cofactor evidence="1">
        <name>FMNH2</name>
        <dbReference type="ChEBI" id="CHEBI:57618"/>
    </cofactor>
    <text evidence="1">Reduced FMN (FMNH(2)).</text>
</comment>
<comment type="pathway">
    <text evidence="1">Metabolic intermediate biosynthesis; chorismate biosynthesis; chorismate from D-erythrose 4-phosphate and phosphoenolpyruvate: step 7/7.</text>
</comment>
<comment type="subunit">
    <text evidence="1">Homotetramer.</text>
</comment>
<comment type="similarity">
    <text evidence="1">Belongs to the chorismate synthase family.</text>
</comment>
<sequence>MSGNTLGLLFTVTTFGESHGPAIGAVVDGCPPGMSLTEADIQIDLDRRKPGTSRHVTQRQEADQVEILSGVFEGKTTGTPICLLIRNTDQRSKDYGNIVETFRPGHADYTYWHKYGIRDYRGGGRSSARLTAPVVAAAAIAKKWLNEQYGTEIRGYMSQLGEVEVPFTDWKHVPENPFFAANADIVPELETYMDALRRDGDSVGARIEVVASHVPVGLGEPLFDKLDADIAHAMMGINAVKGVEIGAGFDSVSQRGTVHGDELTPEGFRTNNSGGVLGGISTGQDIKVSLAIKPTSSIRTARESIDKAGSPASVETFGRHDPCVGIRATPIAEAMLALVLMDHALRHRAQCGDVRVDTPRIPAQAPGKS</sequence>
<name>AROC_CUPMC</name>
<accession>Q1LPA2</accession>
<gene>
    <name evidence="1" type="primary">aroC</name>
    <name type="ordered locus">Rmet_1138</name>
</gene>
<evidence type="ECO:0000255" key="1">
    <source>
        <dbReference type="HAMAP-Rule" id="MF_00300"/>
    </source>
</evidence>
<proteinExistence type="inferred from homology"/>
<protein>
    <recommendedName>
        <fullName evidence="1">Chorismate synthase</fullName>
        <shortName evidence="1">CS</shortName>
        <ecNumber evidence="1">4.2.3.5</ecNumber>
    </recommendedName>
    <alternativeName>
        <fullName evidence="1">5-enolpyruvylshikimate-3-phosphate phospholyase</fullName>
    </alternativeName>
</protein>
<keyword id="KW-0028">Amino-acid biosynthesis</keyword>
<keyword id="KW-0057">Aromatic amino acid biosynthesis</keyword>
<keyword id="KW-0274">FAD</keyword>
<keyword id="KW-0285">Flavoprotein</keyword>
<keyword id="KW-0288">FMN</keyword>
<keyword id="KW-0456">Lyase</keyword>
<keyword id="KW-0521">NADP</keyword>
<keyword id="KW-1185">Reference proteome</keyword>